<organism>
    <name type="scientific">Staphylococcus aureus (strain MSSA476)</name>
    <dbReference type="NCBI Taxonomy" id="282459"/>
    <lineage>
        <taxon>Bacteria</taxon>
        <taxon>Bacillati</taxon>
        <taxon>Bacillota</taxon>
        <taxon>Bacilli</taxon>
        <taxon>Bacillales</taxon>
        <taxon>Staphylococcaceae</taxon>
        <taxon>Staphylococcus</taxon>
    </lineage>
</organism>
<sequence>MTKGILGRKIGMTQVFGENGELIPVTVVEAKENVVLQKKTVEVDGYNAIQVGFEDKKAYKKDAKSNKYANKPAEGHAKKADAAPKRFIREFRNVDVDAYEVGQEVSVDTFVAGDVIDVTGVSKGKGFQGAIKRHGQSRGPMSHGSHFHRAPGSVGMASDASRVFKGQKMPGRMGGNTVTVQNLEVVQVDTENKVILVKGNVPGPKKGLVEIRTSIKKGNK</sequence>
<proteinExistence type="inferred from homology"/>
<keyword id="KW-0687">Ribonucleoprotein</keyword>
<keyword id="KW-0689">Ribosomal protein</keyword>
<keyword id="KW-0694">RNA-binding</keyword>
<keyword id="KW-0699">rRNA-binding</keyword>
<name>RL3_STAAS</name>
<dbReference type="EMBL" id="BX571857">
    <property type="protein sequence ID" value="CAG43952.1"/>
    <property type="molecule type" value="Genomic_DNA"/>
</dbReference>
<dbReference type="RefSeq" id="WP_000160212.1">
    <property type="nucleotide sequence ID" value="NC_002953.3"/>
</dbReference>
<dbReference type="SMR" id="Q6G771"/>
<dbReference type="GeneID" id="98346562"/>
<dbReference type="KEGG" id="sas:SAS2141"/>
<dbReference type="HOGENOM" id="CLU_044142_4_1_9"/>
<dbReference type="GO" id="GO:0022625">
    <property type="term" value="C:cytosolic large ribosomal subunit"/>
    <property type="evidence" value="ECO:0007669"/>
    <property type="project" value="TreeGrafter"/>
</dbReference>
<dbReference type="GO" id="GO:0019843">
    <property type="term" value="F:rRNA binding"/>
    <property type="evidence" value="ECO:0007669"/>
    <property type="project" value="UniProtKB-UniRule"/>
</dbReference>
<dbReference type="GO" id="GO:0003735">
    <property type="term" value="F:structural constituent of ribosome"/>
    <property type="evidence" value="ECO:0007669"/>
    <property type="project" value="InterPro"/>
</dbReference>
<dbReference type="GO" id="GO:0006412">
    <property type="term" value="P:translation"/>
    <property type="evidence" value="ECO:0007669"/>
    <property type="project" value="UniProtKB-UniRule"/>
</dbReference>
<dbReference type="FunFam" id="2.40.30.10:FF:000004">
    <property type="entry name" value="50S ribosomal protein L3"/>
    <property type="match status" value="1"/>
</dbReference>
<dbReference type="FunFam" id="3.30.160.810:FF:000002">
    <property type="entry name" value="50S ribosomal protein L3"/>
    <property type="match status" value="1"/>
</dbReference>
<dbReference type="Gene3D" id="3.30.160.810">
    <property type="match status" value="1"/>
</dbReference>
<dbReference type="Gene3D" id="2.40.30.10">
    <property type="entry name" value="Translation factors"/>
    <property type="match status" value="1"/>
</dbReference>
<dbReference type="HAMAP" id="MF_01325_B">
    <property type="entry name" value="Ribosomal_uL3_B"/>
    <property type="match status" value="1"/>
</dbReference>
<dbReference type="InterPro" id="IPR000597">
    <property type="entry name" value="Ribosomal_uL3"/>
</dbReference>
<dbReference type="InterPro" id="IPR019927">
    <property type="entry name" value="Ribosomal_uL3_bac/org-type"/>
</dbReference>
<dbReference type="InterPro" id="IPR019926">
    <property type="entry name" value="Ribosomal_uL3_CS"/>
</dbReference>
<dbReference type="InterPro" id="IPR009000">
    <property type="entry name" value="Transl_B-barrel_sf"/>
</dbReference>
<dbReference type="NCBIfam" id="TIGR03625">
    <property type="entry name" value="L3_bact"/>
    <property type="match status" value="1"/>
</dbReference>
<dbReference type="PANTHER" id="PTHR11229">
    <property type="entry name" value="50S RIBOSOMAL PROTEIN L3"/>
    <property type="match status" value="1"/>
</dbReference>
<dbReference type="PANTHER" id="PTHR11229:SF16">
    <property type="entry name" value="LARGE RIBOSOMAL SUBUNIT PROTEIN UL3C"/>
    <property type="match status" value="1"/>
</dbReference>
<dbReference type="Pfam" id="PF00297">
    <property type="entry name" value="Ribosomal_L3"/>
    <property type="match status" value="1"/>
</dbReference>
<dbReference type="SUPFAM" id="SSF50447">
    <property type="entry name" value="Translation proteins"/>
    <property type="match status" value="1"/>
</dbReference>
<dbReference type="PROSITE" id="PS00474">
    <property type="entry name" value="RIBOSOMAL_L3"/>
    <property type="match status" value="1"/>
</dbReference>
<protein>
    <recommendedName>
        <fullName evidence="1">Large ribosomal subunit protein uL3</fullName>
    </recommendedName>
    <alternativeName>
        <fullName evidence="3">50S ribosomal protein L3</fullName>
    </alternativeName>
</protein>
<feature type="chain" id="PRO_0000077157" description="Large ribosomal subunit protein uL3">
    <location>
        <begin position="1"/>
        <end position="220"/>
    </location>
</feature>
<feature type="region of interest" description="Disordered" evidence="2">
    <location>
        <begin position="130"/>
        <end position="156"/>
    </location>
</feature>
<accession>Q6G771</accession>
<gene>
    <name evidence="1" type="primary">rplC</name>
    <name type="ordered locus">SAS2141</name>
</gene>
<evidence type="ECO:0000255" key="1">
    <source>
        <dbReference type="HAMAP-Rule" id="MF_01325"/>
    </source>
</evidence>
<evidence type="ECO:0000256" key="2">
    <source>
        <dbReference type="SAM" id="MobiDB-lite"/>
    </source>
</evidence>
<evidence type="ECO:0000305" key="3"/>
<reference key="1">
    <citation type="journal article" date="2004" name="Proc. Natl. Acad. Sci. U.S.A.">
        <title>Complete genomes of two clinical Staphylococcus aureus strains: evidence for the rapid evolution of virulence and drug resistance.</title>
        <authorList>
            <person name="Holden M.T.G."/>
            <person name="Feil E.J."/>
            <person name="Lindsay J.A."/>
            <person name="Peacock S.J."/>
            <person name="Day N.P.J."/>
            <person name="Enright M.C."/>
            <person name="Foster T.J."/>
            <person name="Moore C.E."/>
            <person name="Hurst L."/>
            <person name="Atkin R."/>
            <person name="Barron A."/>
            <person name="Bason N."/>
            <person name="Bentley S.D."/>
            <person name="Chillingworth C."/>
            <person name="Chillingworth T."/>
            <person name="Churcher C."/>
            <person name="Clark L."/>
            <person name="Corton C."/>
            <person name="Cronin A."/>
            <person name="Doggett J."/>
            <person name="Dowd L."/>
            <person name="Feltwell T."/>
            <person name="Hance Z."/>
            <person name="Harris B."/>
            <person name="Hauser H."/>
            <person name="Holroyd S."/>
            <person name="Jagels K."/>
            <person name="James K.D."/>
            <person name="Lennard N."/>
            <person name="Line A."/>
            <person name="Mayes R."/>
            <person name="Moule S."/>
            <person name="Mungall K."/>
            <person name="Ormond D."/>
            <person name="Quail M.A."/>
            <person name="Rabbinowitsch E."/>
            <person name="Rutherford K.M."/>
            <person name="Sanders M."/>
            <person name="Sharp S."/>
            <person name="Simmonds M."/>
            <person name="Stevens K."/>
            <person name="Whitehead S."/>
            <person name="Barrell B.G."/>
            <person name="Spratt B.G."/>
            <person name="Parkhill J."/>
        </authorList>
    </citation>
    <scope>NUCLEOTIDE SEQUENCE [LARGE SCALE GENOMIC DNA]</scope>
    <source>
        <strain>MSSA476</strain>
    </source>
</reference>
<comment type="function">
    <text evidence="1">One of the primary rRNA binding proteins, it binds directly near the 3'-end of the 23S rRNA, where it nucleates assembly of the 50S subunit.</text>
</comment>
<comment type="subunit">
    <text evidence="1">Part of the 50S ribosomal subunit. Forms a cluster with proteins L14 and L19.</text>
</comment>
<comment type="similarity">
    <text evidence="1">Belongs to the universal ribosomal protein uL3 family.</text>
</comment>